<organism evidence="6">
    <name type="scientific">Rattus norvegicus</name>
    <name type="common">Rat</name>
    <dbReference type="NCBI Taxonomy" id="10116"/>
    <lineage>
        <taxon>Eukaryota</taxon>
        <taxon>Metazoa</taxon>
        <taxon>Chordata</taxon>
        <taxon>Craniata</taxon>
        <taxon>Vertebrata</taxon>
        <taxon>Euteleostomi</taxon>
        <taxon>Mammalia</taxon>
        <taxon>Eutheria</taxon>
        <taxon>Euarchontoglires</taxon>
        <taxon>Glires</taxon>
        <taxon>Rodentia</taxon>
        <taxon>Myomorpha</taxon>
        <taxon>Muroidea</taxon>
        <taxon>Muridae</taxon>
        <taxon>Murinae</taxon>
        <taxon>Rattus</taxon>
    </lineage>
</organism>
<accession>P83900</accession>
<gene>
    <name type="primary">Rapgef5</name>
    <name type="synonym">Mrgef</name>
</gene>
<sequence>MGSSRLRVFDPPLERKDSAALSERQLPLPTFDVPYFKYIDEEDEDDEWGSRSQSSTEDDSVDSLLSDRYVVVSGTPEKILEHLLNDLHLAEVQHKETETLLDDFLLTYTVFMTTDDLCQALLRHYSAKKYQGEEENSDVPCRKRKVLHLVSQWISLYKDWLHEDEHSKMFLKTIYRNVLDDVYEYPILEKELKEFQKILGMHRRHTVDEYSPQKKNKALFHQFSLKENWLQHRGTVAETEEIFCHVYVTEHSYISVKAKVSSTAQEILKVVAEKLQRAEEDLALVAIMFSGEKHEFQPNDLAISKSLEASGRIYVYRKDLADTLNPFAENEESQQRSMRILGMNTWDLALELMSFDWSLFNSIHEQELIYFTFSRQGSGEHTVNLSLLLQRCNEVQLWVATEILLCSQLGKRVQLVKKFIKIAAHCKAQQNLNSFFAIVMGLNTASVSRLSQTWEKIPGKFKKLFSELESLTDPSLNHKAYRDAFKKMKPPKIPFMPLLLKDVTFIHEGNKTFLDNLVNFEKLHMIADTVRTLRHCRTNQFGSDMSPKEQQELKSYVNHLYVIDSQQALFELSHRLEPRA</sequence>
<proteinExistence type="evidence at transcript level"/>
<comment type="function">
    <text evidence="1">Guanine nucleotide exchange factor (GEF) for RAP1A, RAP2A and MRAS/M-Ras-GTP. Its association with MRAS inhibits Rap1 activation (By similarity).</text>
</comment>
<comment type="subcellular location">
    <subcellularLocation>
        <location evidence="1">Nucleus</location>
    </subcellularLocation>
</comment>
<comment type="tissue specificity">
    <text evidence="4">In the embryo, expressed in young neurons of the developing telencephalon, diencephalon and hindbrain. Not expressed in progenitor cells in the ventricular zone.</text>
</comment>
<comment type="developmental stage">
    <text evidence="4">Expression is first detected at embryonic day 13.</text>
</comment>
<comment type="induction">
    <text evidence="4">Down-regulated in nerve growth factor-treated PC12 cells.</text>
</comment>
<evidence type="ECO:0000250" key="1"/>
<evidence type="ECO:0000255" key="2">
    <source>
        <dbReference type="PROSITE-ProRule" id="PRU00135"/>
    </source>
</evidence>
<evidence type="ECO:0000255" key="3">
    <source>
        <dbReference type="PROSITE-ProRule" id="PRU00168"/>
    </source>
</evidence>
<evidence type="ECO:0000269" key="4">
    <source>
    </source>
</evidence>
<evidence type="ECO:0000305" key="5"/>
<evidence type="ECO:0000312" key="6">
    <source>
        <dbReference type="EMBL" id="AAR83745.1"/>
    </source>
</evidence>
<feature type="chain" id="PRO_0000068875" description="Rap guanine nucleotide exchange factor 5">
    <location>
        <begin position="1"/>
        <end position="580"/>
    </location>
</feature>
<feature type="domain" description="N-terminal Ras-GEF" evidence="2 5">
    <location>
        <begin position="67"/>
        <end position="200"/>
    </location>
</feature>
<feature type="domain" description="Ras-GEF" evidence="3 5">
    <location>
        <begin position="344"/>
        <end position="579"/>
    </location>
</feature>
<protein>
    <recommendedName>
        <fullName>Rap guanine nucleotide exchange factor 5</fullName>
    </recommendedName>
    <alternativeName>
        <fullName>M-Ras-regulated Rap GEF</fullName>
        <shortName>MR-GEF</shortName>
        <shortName>rMR-GEF</shortName>
    </alternativeName>
</protein>
<keyword id="KW-0344">Guanine-nucleotide releasing factor</keyword>
<keyword id="KW-0539">Nucleus</keyword>
<keyword id="KW-1185">Reference proteome</keyword>
<reference evidence="5" key="1">
    <citation type="journal article" date="2003" name="Brain Res. Dev. Brain Res.">
        <title>Expression of the guanine nucleotide exchange factor, mr-gef, is regulated during the differentiation of specific subsets of telencephalic neurons.</title>
        <authorList>
            <person name="Bithell A."/>
            <person name="Alberta J."/>
            <person name="Hornby F."/>
            <person name="Stiles C.D."/>
            <person name="Williams B.P."/>
        </authorList>
    </citation>
    <scope>NUCLEOTIDE SEQUENCE [MRNA]</scope>
    <scope>TISSUE SPECIFICITY</scope>
    <scope>DEVELOPMENTAL STAGE</scope>
    <scope>INDUCTION</scope>
    <source>
        <strain evidence="6">Sprague-Dawley</strain>
        <tissue evidence="6">Brain cortex</tissue>
    </source>
</reference>
<name>RPGF5_RAT</name>
<dbReference type="EMBL" id="AY390379">
    <property type="protein sequence ID" value="AAR83745.1"/>
    <property type="molecule type" value="mRNA"/>
</dbReference>
<dbReference type="RefSeq" id="NP_001041380.1">
    <property type="nucleotide sequence ID" value="NM_001047915.1"/>
</dbReference>
<dbReference type="SMR" id="P83900"/>
<dbReference type="BioGRID" id="263730">
    <property type="interactions" value="1"/>
</dbReference>
<dbReference type="FunCoup" id="P83900">
    <property type="interactions" value="331"/>
</dbReference>
<dbReference type="STRING" id="10116.ENSRNOP00000007112"/>
<dbReference type="iPTMnet" id="P83900"/>
<dbReference type="PhosphoSitePlus" id="P83900"/>
<dbReference type="PaxDb" id="10116-ENSRNOP00000007112"/>
<dbReference type="GeneID" id="362799"/>
<dbReference type="KEGG" id="rno:362799"/>
<dbReference type="UCSC" id="RGD:1561668">
    <property type="organism name" value="rat"/>
</dbReference>
<dbReference type="AGR" id="RGD:1561668"/>
<dbReference type="CTD" id="9771"/>
<dbReference type="RGD" id="1561668">
    <property type="gene designation" value="Rapgef5"/>
</dbReference>
<dbReference type="eggNOG" id="KOG2378">
    <property type="taxonomic scope" value="Eukaryota"/>
</dbReference>
<dbReference type="InParanoid" id="P83900"/>
<dbReference type="PhylomeDB" id="P83900"/>
<dbReference type="PRO" id="PR:P83900"/>
<dbReference type="Proteomes" id="UP000002494">
    <property type="component" value="Unplaced"/>
</dbReference>
<dbReference type="GO" id="GO:0005634">
    <property type="term" value="C:nucleus"/>
    <property type="evidence" value="ECO:0000266"/>
    <property type="project" value="RGD"/>
</dbReference>
<dbReference type="GO" id="GO:0005886">
    <property type="term" value="C:plasma membrane"/>
    <property type="evidence" value="ECO:0000318"/>
    <property type="project" value="GO_Central"/>
</dbReference>
<dbReference type="GO" id="GO:0030742">
    <property type="term" value="F:GTP-dependent protein binding"/>
    <property type="evidence" value="ECO:0000266"/>
    <property type="project" value="RGD"/>
</dbReference>
<dbReference type="GO" id="GO:0005085">
    <property type="term" value="F:guanyl-nucleotide exchange factor activity"/>
    <property type="evidence" value="ECO:0000266"/>
    <property type="project" value="RGD"/>
</dbReference>
<dbReference type="GO" id="GO:0007265">
    <property type="term" value="P:Ras protein signal transduction"/>
    <property type="evidence" value="ECO:0000318"/>
    <property type="project" value="GO_Central"/>
</dbReference>
<dbReference type="CDD" id="cd00155">
    <property type="entry name" value="RasGEF"/>
    <property type="match status" value="1"/>
</dbReference>
<dbReference type="CDD" id="cd06224">
    <property type="entry name" value="REM"/>
    <property type="match status" value="1"/>
</dbReference>
<dbReference type="FunFam" id="1.10.840.10:FF:000002">
    <property type="entry name" value="Rap guanine nucleotide exchange factor 4"/>
    <property type="match status" value="1"/>
</dbReference>
<dbReference type="FunFam" id="1.20.870.10:FF:000019">
    <property type="entry name" value="Rap guanine nucleotide exchange factor 5"/>
    <property type="match status" value="1"/>
</dbReference>
<dbReference type="Gene3D" id="3.10.20.90">
    <property type="entry name" value="Phosphatidylinositol 3-kinase Catalytic Subunit, Chain A, domain 1"/>
    <property type="match status" value="1"/>
</dbReference>
<dbReference type="Gene3D" id="1.10.840.10">
    <property type="entry name" value="Ras guanine-nucleotide exchange factors catalytic domain"/>
    <property type="match status" value="1"/>
</dbReference>
<dbReference type="Gene3D" id="1.20.870.10">
    <property type="entry name" value="Son of sevenless (SoS) protein Chain: S domain 1"/>
    <property type="match status" value="1"/>
</dbReference>
<dbReference type="InterPro" id="IPR008937">
    <property type="entry name" value="Ras-like_GEF"/>
</dbReference>
<dbReference type="InterPro" id="IPR000651">
    <property type="entry name" value="Ras-like_Gua-exchang_fac_N"/>
</dbReference>
<dbReference type="InterPro" id="IPR019804">
    <property type="entry name" value="Ras_G-nucl-exch_fac_CS"/>
</dbReference>
<dbReference type="InterPro" id="IPR023578">
    <property type="entry name" value="Ras_GEF_dom_sf"/>
</dbReference>
<dbReference type="InterPro" id="IPR001895">
    <property type="entry name" value="RASGEF_cat_dom"/>
</dbReference>
<dbReference type="InterPro" id="IPR036964">
    <property type="entry name" value="RASGEF_cat_dom_sf"/>
</dbReference>
<dbReference type="InterPro" id="IPR029071">
    <property type="entry name" value="Ubiquitin-like_domsf"/>
</dbReference>
<dbReference type="PANTHER" id="PTHR23113">
    <property type="entry name" value="GUANINE NUCLEOTIDE EXCHANGE FACTOR"/>
    <property type="match status" value="1"/>
</dbReference>
<dbReference type="PANTHER" id="PTHR23113:SF26">
    <property type="entry name" value="RAP GUANINE NUCLEOTIDE EXCHANGE FACTOR 5"/>
    <property type="match status" value="1"/>
</dbReference>
<dbReference type="Pfam" id="PF00617">
    <property type="entry name" value="RasGEF"/>
    <property type="match status" value="1"/>
</dbReference>
<dbReference type="Pfam" id="PF00618">
    <property type="entry name" value="RasGEF_N"/>
    <property type="match status" value="1"/>
</dbReference>
<dbReference type="SMART" id="SM00147">
    <property type="entry name" value="RasGEF"/>
    <property type="match status" value="1"/>
</dbReference>
<dbReference type="SMART" id="SM00229">
    <property type="entry name" value="RasGEFN"/>
    <property type="match status" value="1"/>
</dbReference>
<dbReference type="SUPFAM" id="SSF48366">
    <property type="entry name" value="Ras GEF"/>
    <property type="match status" value="1"/>
</dbReference>
<dbReference type="SUPFAM" id="SSF54236">
    <property type="entry name" value="Ubiquitin-like"/>
    <property type="match status" value="1"/>
</dbReference>
<dbReference type="PROSITE" id="PS00720">
    <property type="entry name" value="RASGEF"/>
    <property type="match status" value="1"/>
</dbReference>
<dbReference type="PROSITE" id="PS50009">
    <property type="entry name" value="RASGEF_CAT"/>
    <property type="match status" value="1"/>
</dbReference>
<dbReference type="PROSITE" id="PS50212">
    <property type="entry name" value="RASGEF_NTER"/>
    <property type="match status" value="1"/>
</dbReference>